<name>VATC2_HUMAN</name>
<accession>Q8NEY4</accession>
<accession>Q96EL8</accession>
<gene>
    <name type="primary">ATP6V1C2</name>
</gene>
<evidence type="ECO:0000250" key="1">
    <source>
        <dbReference type="UniProtKB" id="P21282"/>
    </source>
</evidence>
<evidence type="ECO:0000250" key="2">
    <source>
        <dbReference type="UniProtKB" id="P21283"/>
    </source>
</evidence>
<evidence type="ECO:0000250" key="3">
    <source>
        <dbReference type="UniProtKB" id="P31412"/>
    </source>
</evidence>
<evidence type="ECO:0000256" key="4">
    <source>
        <dbReference type="SAM" id="MobiDB-lite"/>
    </source>
</evidence>
<evidence type="ECO:0000269" key="5">
    <source>
    </source>
</evidence>
<evidence type="ECO:0000269" key="6">
    <source>
    </source>
</evidence>
<evidence type="ECO:0000303" key="7">
    <source>
    </source>
</evidence>
<evidence type="ECO:0000303" key="8">
    <source>
    </source>
</evidence>
<evidence type="ECO:0000305" key="9"/>
<dbReference type="EMBL" id="AY039759">
    <property type="protein sequence ID" value="AAK83464.1"/>
    <property type="molecule type" value="mRNA"/>
</dbReference>
<dbReference type="EMBL" id="AC092687">
    <property type="protein sequence ID" value="AAY24069.1"/>
    <property type="status" value="ALT_SEQ"/>
    <property type="molecule type" value="Genomic_DNA"/>
</dbReference>
<dbReference type="EMBL" id="BC012142">
    <property type="protein sequence ID" value="AAH12142.1"/>
    <property type="molecule type" value="mRNA"/>
</dbReference>
<dbReference type="CCDS" id="CCDS1674.1">
    <molecule id="Q8NEY4-2"/>
</dbReference>
<dbReference type="CCDS" id="CCDS42653.1">
    <molecule id="Q8NEY4-1"/>
</dbReference>
<dbReference type="RefSeq" id="NP_001034451.1">
    <molecule id="Q8NEY4-1"/>
    <property type="nucleotide sequence ID" value="NM_001039362.2"/>
</dbReference>
<dbReference type="RefSeq" id="NP_653184.2">
    <molecule id="Q8NEY4-2"/>
    <property type="nucleotide sequence ID" value="NM_144583.3"/>
</dbReference>
<dbReference type="RefSeq" id="XP_016859234.1">
    <molecule id="Q8NEY4-1"/>
    <property type="nucleotide sequence ID" value="XM_017003745.3"/>
</dbReference>
<dbReference type="RefSeq" id="XP_047299816.1">
    <molecule id="Q8NEY4-2"/>
    <property type="nucleotide sequence ID" value="XM_047443860.1"/>
</dbReference>
<dbReference type="RefSeq" id="XP_054197225.1">
    <molecule id="Q8NEY4-1"/>
    <property type="nucleotide sequence ID" value="XM_054341250.1"/>
</dbReference>
<dbReference type="RefSeq" id="XP_054197227.1">
    <molecule id="Q8NEY4-2"/>
    <property type="nucleotide sequence ID" value="XM_054341252.1"/>
</dbReference>
<dbReference type="SMR" id="Q8NEY4"/>
<dbReference type="BioGRID" id="128859">
    <property type="interactions" value="53"/>
</dbReference>
<dbReference type="ComplexPortal" id="CPX-2470">
    <property type="entry name" value="Vacuolar proton translocating ATPase complex, ATP6V0A1 variant"/>
</dbReference>
<dbReference type="ComplexPortal" id="CPX-6904">
    <property type="entry name" value="Vacuolar proton translocating ATPase complex, ATP6V0A2 variant"/>
</dbReference>
<dbReference type="ComplexPortal" id="CPX-6905">
    <property type="entry name" value="Vacuolar proton translocating ATPase complex, ATP6V0A3 variant"/>
</dbReference>
<dbReference type="ComplexPortal" id="CPX-6912">
    <property type="entry name" value="Vacuolar proton translocating ATPase complex, ATP6V0A4 variant"/>
</dbReference>
<dbReference type="FunCoup" id="Q8NEY4">
    <property type="interactions" value="612"/>
</dbReference>
<dbReference type="IntAct" id="Q8NEY4">
    <property type="interactions" value="30"/>
</dbReference>
<dbReference type="MINT" id="Q8NEY4"/>
<dbReference type="STRING" id="9606.ENSP00000272238"/>
<dbReference type="DrugBank" id="DB01133">
    <property type="generic name" value="Tiludronic acid"/>
</dbReference>
<dbReference type="TCDB" id="3.A.2.2.4">
    <property type="family name" value="the h+- or na+-translocating f-type, v-type and a-type atpase (f-atpase) superfamily"/>
</dbReference>
<dbReference type="iPTMnet" id="Q8NEY4"/>
<dbReference type="PhosphoSitePlus" id="Q8NEY4"/>
<dbReference type="BioMuta" id="ATP6V1C2"/>
<dbReference type="DMDM" id="146325814"/>
<dbReference type="jPOST" id="Q8NEY4"/>
<dbReference type="MassIVE" id="Q8NEY4"/>
<dbReference type="PaxDb" id="9606-ENSP00000272238"/>
<dbReference type="PeptideAtlas" id="Q8NEY4"/>
<dbReference type="ProteomicsDB" id="73238">
    <molecule id="Q8NEY4-1"/>
</dbReference>
<dbReference type="ProteomicsDB" id="73239">
    <molecule id="Q8NEY4-2"/>
</dbReference>
<dbReference type="Antibodypedia" id="26729">
    <property type="antibodies" value="319 antibodies from 30 providers"/>
</dbReference>
<dbReference type="DNASU" id="245973"/>
<dbReference type="Ensembl" id="ENST00000272238.9">
    <molecule id="Q8NEY4-1"/>
    <property type="protein sequence ID" value="ENSP00000272238.4"/>
    <property type="gene ID" value="ENSG00000143882.12"/>
</dbReference>
<dbReference type="Ensembl" id="ENST00000381661.3">
    <molecule id="Q8NEY4-2"/>
    <property type="protein sequence ID" value="ENSP00000371077.3"/>
    <property type="gene ID" value="ENSG00000143882.12"/>
</dbReference>
<dbReference type="GeneID" id="245973"/>
<dbReference type="KEGG" id="hsa:245973"/>
<dbReference type="MANE-Select" id="ENST00000272238.9">
    <property type="protein sequence ID" value="ENSP00000272238.4"/>
    <property type="RefSeq nucleotide sequence ID" value="NM_001039362.2"/>
    <property type="RefSeq protein sequence ID" value="NP_001034451.1"/>
</dbReference>
<dbReference type="UCSC" id="uc002ras.4">
    <molecule id="Q8NEY4-1"/>
    <property type="organism name" value="human"/>
</dbReference>
<dbReference type="AGR" id="HGNC:18264"/>
<dbReference type="CTD" id="245973"/>
<dbReference type="DisGeNET" id="245973"/>
<dbReference type="GeneCards" id="ATP6V1C2"/>
<dbReference type="HGNC" id="HGNC:18264">
    <property type="gene designation" value="ATP6V1C2"/>
</dbReference>
<dbReference type="HPA" id="ENSG00000143882">
    <property type="expression patterns" value="Tissue enhanced (epididymis, salivary gland, skin)"/>
</dbReference>
<dbReference type="MIM" id="618070">
    <property type="type" value="gene"/>
</dbReference>
<dbReference type="neXtProt" id="NX_Q8NEY4"/>
<dbReference type="OpenTargets" id="ENSG00000143882"/>
<dbReference type="PharmGKB" id="PA38514"/>
<dbReference type="VEuPathDB" id="HostDB:ENSG00000143882"/>
<dbReference type="eggNOG" id="KOG2909">
    <property type="taxonomic scope" value="Eukaryota"/>
</dbReference>
<dbReference type="GeneTree" id="ENSGT00390000004263"/>
<dbReference type="HOGENOM" id="CLU_017554_3_0_1"/>
<dbReference type="InParanoid" id="Q8NEY4"/>
<dbReference type="OMA" id="KSSYIQW"/>
<dbReference type="OrthoDB" id="6605928at2759"/>
<dbReference type="PAN-GO" id="Q8NEY4">
    <property type="GO annotations" value="2 GO annotations based on evolutionary models"/>
</dbReference>
<dbReference type="PhylomeDB" id="Q8NEY4"/>
<dbReference type="TreeFam" id="TF314912"/>
<dbReference type="BioCyc" id="MetaCyc:HS07123-MONOMER"/>
<dbReference type="PathwayCommons" id="Q8NEY4"/>
<dbReference type="Reactome" id="R-HSA-1222556">
    <property type="pathway name" value="ROS and RNS production in phagocytes"/>
</dbReference>
<dbReference type="Reactome" id="R-HSA-77387">
    <property type="pathway name" value="Insulin receptor recycling"/>
</dbReference>
<dbReference type="Reactome" id="R-HSA-917977">
    <property type="pathway name" value="Transferrin endocytosis and recycling"/>
</dbReference>
<dbReference type="Reactome" id="R-HSA-9639288">
    <property type="pathway name" value="Amino acids regulate mTORC1"/>
</dbReference>
<dbReference type="Reactome" id="R-HSA-983712">
    <property type="pathway name" value="Ion channel transport"/>
</dbReference>
<dbReference type="SignaLink" id="Q8NEY4"/>
<dbReference type="BioGRID-ORCS" id="245973">
    <property type="hits" value="9 hits in 1152 CRISPR screens"/>
</dbReference>
<dbReference type="ChiTaRS" id="ATP6V1C2">
    <property type="organism name" value="human"/>
</dbReference>
<dbReference type="GeneWiki" id="ATP6V1C2"/>
<dbReference type="GenomeRNAi" id="245973"/>
<dbReference type="Pharos" id="Q8NEY4">
    <property type="development level" value="Tbio"/>
</dbReference>
<dbReference type="PRO" id="PR:Q8NEY4"/>
<dbReference type="Proteomes" id="UP000005640">
    <property type="component" value="Chromosome 2"/>
</dbReference>
<dbReference type="RNAct" id="Q8NEY4">
    <property type="molecule type" value="protein"/>
</dbReference>
<dbReference type="Bgee" id="ENSG00000143882">
    <property type="expression patterns" value="Expressed in skin of abdomen and 118 other cell types or tissues"/>
</dbReference>
<dbReference type="ExpressionAtlas" id="Q8NEY4">
    <property type="expression patterns" value="baseline and differential"/>
</dbReference>
<dbReference type="GO" id="GO:0005829">
    <property type="term" value="C:cytosol"/>
    <property type="evidence" value="ECO:0000304"/>
    <property type="project" value="Reactome"/>
</dbReference>
<dbReference type="GO" id="GO:0070062">
    <property type="term" value="C:extracellular exosome"/>
    <property type="evidence" value="ECO:0007005"/>
    <property type="project" value="UniProtKB"/>
</dbReference>
<dbReference type="GO" id="GO:0005765">
    <property type="term" value="C:lysosomal membrane"/>
    <property type="evidence" value="ECO:0007005"/>
    <property type="project" value="UniProtKB"/>
</dbReference>
<dbReference type="GO" id="GO:0000221">
    <property type="term" value="C:vacuolar proton-transporting V-type ATPase, V1 domain"/>
    <property type="evidence" value="ECO:0000318"/>
    <property type="project" value="GO_Central"/>
</dbReference>
<dbReference type="GO" id="GO:0042802">
    <property type="term" value="F:identical protein binding"/>
    <property type="evidence" value="ECO:0000353"/>
    <property type="project" value="UniProtKB"/>
</dbReference>
<dbReference type="GO" id="GO:0046961">
    <property type="term" value="F:proton-transporting ATPase activity, rotational mechanism"/>
    <property type="evidence" value="ECO:0000318"/>
    <property type="project" value="GO_Central"/>
</dbReference>
<dbReference type="GO" id="GO:0030177">
    <property type="term" value="P:positive regulation of Wnt signaling pathway"/>
    <property type="evidence" value="ECO:0000315"/>
    <property type="project" value="UniProtKB"/>
</dbReference>
<dbReference type="GO" id="GO:0016241">
    <property type="term" value="P:regulation of macroautophagy"/>
    <property type="evidence" value="ECO:0000303"/>
    <property type="project" value="ParkinsonsUK-UCL"/>
</dbReference>
<dbReference type="CDD" id="cd14785">
    <property type="entry name" value="V-ATPase_C"/>
    <property type="match status" value="1"/>
</dbReference>
<dbReference type="FunFam" id="1.20.1460.10:FF:000004">
    <property type="entry name" value="V-type proton ATPase subunit C"/>
    <property type="match status" value="1"/>
</dbReference>
<dbReference type="FunFam" id="1.20.1460.10:FF:000005">
    <property type="entry name" value="V-type proton ATPase subunit C"/>
    <property type="match status" value="1"/>
</dbReference>
<dbReference type="FunFam" id="3.30.70.100:FF:000002">
    <property type="entry name" value="V-type proton ATPase subunit C"/>
    <property type="match status" value="1"/>
</dbReference>
<dbReference type="Gene3D" id="3.30.70.100">
    <property type="match status" value="1"/>
</dbReference>
<dbReference type="Gene3D" id="1.20.1460.10">
    <property type="entry name" value="subunit c (vma5p) of the yeast v-atpase, domain 2"/>
    <property type="match status" value="1"/>
</dbReference>
<dbReference type="InterPro" id="IPR004907">
    <property type="entry name" value="ATPase_V1-cplx_csu"/>
</dbReference>
<dbReference type="InterPro" id="IPR036132">
    <property type="entry name" value="Vac_ATP_synth_c_sf"/>
</dbReference>
<dbReference type="PANTHER" id="PTHR10137">
    <property type="entry name" value="V-TYPE PROTON ATPASE SUBUNIT C"/>
    <property type="match status" value="1"/>
</dbReference>
<dbReference type="PANTHER" id="PTHR10137:SF4">
    <property type="entry name" value="V-TYPE PROTON ATPASE SUBUNIT C 2"/>
    <property type="match status" value="1"/>
</dbReference>
<dbReference type="Pfam" id="PF03223">
    <property type="entry name" value="V-ATPase_C"/>
    <property type="match status" value="1"/>
</dbReference>
<dbReference type="SUPFAM" id="SSF118203">
    <property type="entry name" value="Vacuolar ATP synthase subunit C"/>
    <property type="match status" value="2"/>
</dbReference>
<organism>
    <name type="scientific">Homo sapiens</name>
    <name type="common">Human</name>
    <dbReference type="NCBI Taxonomy" id="9606"/>
    <lineage>
        <taxon>Eukaryota</taxon>
        <taxon>Metazoa</taxon>
        <taxon>Chordata</taxon>
        <taxon>Craniata</taxon>
        <taxon>Vertebrata</taxon>
        <taxon>Euteleostomi</taxon>
        <taxon>Mammalia</taxon>
        <taxon>Eutheria</taxon>
        <taxon>Euarchontoglires</taxon>
        <taxon>Primates</taxon>
        <taxon>Haplorrhini</taxon>
        <taxon>Catarrhini</taxon>
        <taxon>Hominidae</taxon>
        <taxon>Homo</taxon>
    </lineage>
</organism>
<proteinExistence type="evidence at protein level"/>
<sequence length="427" mass="48759">MSEFWLISAPGDKENLQALERMNTVTSKSNLSYNTKFAIPDFKVGTLDSLVGLSDELGKLDTFAESLIRRMAQSVVEVMEDSKGKVQEHLLANGVDLTSFVTHFEWDMAKYPVKQPLVSVVDTIAKQLAQIEMDLKSRTAAYNTLKTNLENLEKKSMGNLFTRTLSDIVSKEDFVLDSEYLVTLLVIVPKPNYSQWQKTYESLSDMVVPRSTKLITEDKEGGLFTVTLFRKVIEDFKTKAKENKFTVREFYYDEKEIEREREEMARLLSDKKQQYQTSCVALKKGSSTFPDHKVKVTPLGNPDRPAAGQTDRERESEGEGEGPLLRWLKVNFSEAFIAWIHIKALRVFVESVLRYGLPVNFQAVLLQPHKKSSTKRLREVLNSVFRHLDEVAATSILDASVEIPGLQLNNQDYFPYVYFHIDLSLLD</sequence>
<feature type="chain" id="PRO_0000285669" description="V-type proton ATPase subunit C 2">
    <location>
        <begin position="1"/>
        <end position="427"/>
    </location>
</feature>
<feature type="region of interest" description="Disordered" evidence="4">
    <location>
        <begin position="292"/>
        <end position="319"/>
    </location>
</feature>
<feature type="splice variant" id="VSP_024883" description="In isoform 2." evidence="7 8">
    <location>
        <begin position="276"/>
        <end position="321"/>
    </location>
</feature>
<feature type="sequence variant" id="VAR_032041" description="In dbSNP:rs1198849." evidence="6">
    <original>N</original>
    <variation>D</variation>
    <location>
        <position position="143"/>
    </location>
</feature>
<keyword id="KW-0025">Alternative splicing</keyword>
<keyword id="KW-0375">Hydrogen ion transport</keyword>
<keyword id="KW-0406">Ion transport</keyword>
<keyword id="KW-1267">Proteomics identification</keyword>
<keyword id="KW-1185">Reference proteome</keyword>
<keyword id="KW-0813">Transport</keyword>
<reference key="1">
    <citation type="journal article" date="2002" name="Gene">
        <title>Molecular cloning and characterization of novel tissue-specific isoforms of the human vacuolar H(+)-ATPase C, G and d subunits, and their evaluation in autosomal recessive distal renal tubular acidosis.</title>
        <authorList>
            <person name="Smith A.N."/>
            <person name="Borthwick K.J."/>
            <person name="Karet F.E."/>
        </authorList>
    </citation>
    <scope>NUCLEOTIDE SEQUENCE [MRNA] (ISOFORM 2)</scope>
    <scope>ALTERNATIVE SPLICING</scope>
    <scope>TISSUE SPECIFICITY</scope>
</reference>
<reference key="2">
    <citation type="journal article" date="2005" name="Nature">
        <title>Generation and annotation of the DNA sequences of human chromosomes 2 and 4.</title>
        <authorList>
            <person name="Hillier L.W."/>
            <person name="Graves T.A."/>
            <person name="Fulton R.S."/>
            <person name="Fulton L.A."/>
            <person name="Pepin K.H."/>
            <person name="Minx P."/>
            <person name="Wagner-McPherson C."/>
            <person name="Layman D."/>
            <person name="Wylie K."/>
            <person name="Sekhon M."/>
            <person name="Becker M.C."/>
            <person name="Fewell G.A."/>
            <person name="Delehaunty K.D."/>
            <person name="Miner T.L."/>
            <person name="Nash W.E."/>
            <person name="Kremitzki C."/>
            <person name="Oddy L."/>
            <person name="Du H."/>
            <person name="Sun H."/>
            <person name="Bradshaw-Cordum H."/>
            <person name="Ali J."/>
            <person name="Carter J."/>
            <person name="Cordes M."/>
            <person name="Harris A."/>
            <person name="Isak A."/>
            <person name="van Brunt A."/>
            <person name="Nguyen C."/>
            <person name="Du F."/>
            <person name="Courtney L."/>
            <person name="Kalicki J."/>
            <person name="Ozersky P."/>
            <person name="Abbott S."/>
            <person name="Armstrong J."/>
            <person name="Belter E.A."/>
            <person name="Caruso L."/>
            <person name="Cedroni M."/>
            <person name="Cotton M."/>
            <person name="Davidson T."/>
            <person name="Desai A."/>
            <person name="Elliott G."/>
            <person name="Erb T."/>
            <person name="Fronick C."/>
            <person name="Gaige T."/>
            <person name="Haakenson W."/>
            <person name="Haglund K."/>
            <person name="Holmes A."/>
            <person name="Harkins R."/>
            <person name="Kim K."/>
            <person name="Kruchowski S.S."/>
            <person name="Strong C.M."/>
            <person name="Grewal N."/>
            <person name="Goyea E."/>
            <person name="Hou S."/>
            <person name="Levy A."/>
            <person name="Martinka S."/>
            <person name="Mead K."/>
            <person name="McLellan M.D."/>
            <person name="Meyer R."/>
            <person name="Randall-Maher J."/>
            <person name="Tomlinson C."/>
            <person name="Dauphin-Kohlberg S."/>
            <person name="Kozlowicz-Reilly A."/>
            <person name="Shah N."/>
            <person name="Swearengen-Shahid S."/>
            <person name="Snider J."/>
            <person name="Strong J.T."/>
            <person name="Thompson J."/>
            <person name="Yoakum M."/>
            <person name="Leonard S."/>
            <person name="Pearman C."/>
            <person name="Trani L."/>
            <person name="Radionenko M."/>
            <person name="Waligorski J.E."/>
            <person name="Wang C."/>
            <person name="Rock S.M."/>
            <person name="Tin-Wollam A.-M."/>
            <person name="Maupin R."/>
            <person name="Latreille P."/>
            <person name="Wendl M.C."/>
            <person name="Yang S.-P."/>
            <person name="Pohl C."/>
            <person name="Wallis J.W."/>
            <person name="Spieth J."/>
            <person name="Bieri T.A."/>
            <person name="Berkowicz N."/>
            <person name="Nelson J.O."/>
            <person name="Osborne J."/>
            <person name="Ding L."/>
            <person name="Meyer R."/>
            <person name="Sabo A."/>
            <person name="Shotland Y."/>
            <person name="Sinha P."/>
            <person name="Wohldmann P.E."/>
            <person name="Cook L.L."/>
            <person name="Hickenbotham M.T."/>
            <person name="Eldred J."/>
            <person name="Williams D."/>
            <person name="Jones T.A."/>
            <person name="She X."/>
            <person name="Ciccarelli F.D."/>
            <person name="Izaurralde E."/>
            <person name="Taylor J."/>
            <person name="Schmutz J."/>
            <person name="Myers R.M."/>
            <person name="Cox D.R."/>
            <person name="Huang X."/>
            <person name="McPherson J.D."/>
            <person name="Mardis E.R."/>
            <person name="Clifton S.W."/>
            <person name="Warren W.C."/>
            <person name="Chinwalla A.T."/>
            <person name="Eddy S.R."/>
            <person name="Marra M.A."/>
            <person name="Ovcharenko I."/>
            <person name="Furey T.S."/>
            <person name="Miller W."/>
            <person name="Eichler E.E."/>
            <person name="Bork P."/>
            <person name="Suyama M."/>
            <person name="Torrents D."/>
            <person name="Waterston R.H."/>
            <person name="Wilson R.K."/>
        </authorList>
    </citation>
    <scope>NUCLEOTIDE SEQUENCE [LARGE SCALE GENOMIC DNA]</scope>
</reference>
<reference key="3">
    <citation type="journal article" date="2004" name="Genome Res.">
        <title>The status, quality, and expansion of the NIH full-length cDNA project: the Mammalian Gene Collection (MGC).</title>
        <authorList>
            <consortium name="The MGC Project Team"/>
        </authorList>
    </citation>
    <scope>NUCLEOTIDE SEQUENCE [LARGE SCALE MRNA] (ISOFORM 2)</scope>
    <scope>VARIANT ASP-143</scope>
    <source>
        <tissue>Eye</tissue>
    </source>
</reference>
<protein>
    <recommendedName>
        <fullName>V-type proton ATPase subunit C 2</fullName>
        <shortName>V-ATPase subunit C 2</shortName>
    </recommendedName>
    <alternativeName>
        <fullName>Vacuolar proton pump subunit C 2</fullName>
    </alternativeName>
</protein>
<comment type="function">
    <text evidence="1 2 3">Subunit of the V1 complex of vacuolar(H+)-ATPase (V-ATPase), a multisubunit enzyme composed of a peripheral complex (V1) that hydrolyzes ATP and a membrane integral complex (V0) that translocates protons (By similarity). V-ATPase is responsible for acidifying and maintaining the pH of intracellular compartments and in some cell types, is targeted to the plasma membrane, where it is responsible for acidifying the extracellular environment (By similarity). Subunit C is necessary for the assembly of the catalytic sector of the enzyme and is likely to have a specific function in its catalytic activity (By similarity).</text>
</comment>
<comment type="subunit">
    <text evidence="2">V-ATPase is a heteromultimeric enzyme made up of two complexes: the ATP-hydrolytic V1 complex and the proton translocation V0 complex. The V1 complex consists of three catalytic AB heterodimers that form a heterohexamer, three peripheral stalks each consisting of EG heterodimers, one central rotor including subunits D and F, and the regulatory subunits C and H. The proton translocation complex V0 consists of the proton transport subunit a, a ring of proteolipid subunits c9c'', rotary subunit d, subunits e and f, and the accessory subunits ATP6AP1/Ac45 and ATP6AP2/PRR.</text>
</comment>
<comment type="interaction">
    <interactant intactId="EBI-10270867">
        <id>Q8NEY4-2</id>
    </interactant>
    <interactant intactId="EBI-618309">
        <id>Q08379</id>
        <label>GOLGA2</label>
    </interactant>
    <organismsDiffer>false</organismsDiffer>
    <experiments>6</experiments>
</comment>
<comment type="interaction">
    <interactant intactId="EBI-10270867">
        <id>Q8NEY4-2</id>
    </interactant>
    <interactant intactId="EBI-2510117">
        <id>Q6TFL4</id>
        <label>KLHL24</label>
    </interactant>
    <organismsDiffer>false</organismsDiffer>
    <experiments>3</experiments>
</comment>
<comment type="interaction">
    <interactant intactId="EBI-10270867">
        <id>Q8NEY4-2</id>
    </interactant>
    <interactant intactId="EBI-10176379">
        <id>P59991</id>
        <label>KRTAP12-2</label>
    </interactant>
    <organismsDiffer>false</organismsDiffer>
    <experiments>3</experiments>
</comment>
<comment type="interaction">
    <interactant intactId="EBI-10270867">
        <id>Q8NEY4-2</id>
    </interactant>
    <interactant intactId="EBI-16439278">
        <id>Q6FHY5</id>
        <label>MEOX2</label>
    </interactant>
    <organismsDiffer>false</organismsDiffer>
    <experiments>3</experiments>
</comment>
<comment type="interaction">
    <interactant intactId="EBI-10270867">
        <id>Q8NEY4-2</id>
    </interactant>
    <interactant intactId="EBI-747278">
        <id>P26367</id>
        <label>PAX6</label>
    </interactant>
    <organismsDiffer>false</organismsDiffer>
    <experiments>3</experiments>
</comment>
<comment type="interaction">
    <interactant intactId="EBI-10270867">
        <id>Q8NEY4-2</id>
    </interactant>
    <interactant intactId="EBI-10829018">
        <id>Q04864-2</id>
        <label>REL</label>
    </interactant>
    <organismsDiffer>false</organismsDiffer>
    <experiments>3</experiments>
</comment>
<comment type="interaction">
    <interactant intactId="EBI-10270867">
        <id>Q8NEY4-2</id>
    </interactant>
    <interactant intactId="EBI-12037215">
        <id>Q5MJ09</id>
        <label>SPANXN3</label>
    </interactant>
    <organismsDiffer>false</organismsDiffer>
    <experiments>3</experiments>
</comment>
<comment type="alternative products">
    <event type="alternative splicing"/>
    <isoform>
        <id>Q8NEY4-1</id>
        <name>1</name>
        <sequence type="displayed"/>
    </isoform>
    <isoform>
        <id>Q8NEY4-2</id>
        <name>2</name>
        <sequence type="described" ref="VSP_024883"/>
    </isoform>
</comment>
<comment type="tissue specificity">
    <text evidence="5">Kidney and placenta.</text>
</comment>
<comment type="similarity">
    <text evidence="9">Belongs to the V-ATPase C subunit family.</text>
</comment>
<comment type="sequence caution" evidence="9">
    <conflict type="erroneous gene model prediction">
        <sequence resource="EMBL-CDS" id="AAY24069"/>
    </conflict>
</comment>